<dbReference type="EC" id="2.7.11.33" evidence="1"/>
<dbReference type="EC" id="2.7.4.28" evidence="1"/>
<dbReference type="EMBL" id="AE017220">
    <property type="protein sequence ID" value="AAX65273.1"/>
    <property type="molecule type" value="Genomic_DNA"/>
</dbReference>
<dbReference type="RefSeq" id="WP_000370992.1">
    <property type="nucleotide sequence ID" value="NC_006905.1"/>
</dbReference>
<dbReference type="SMR" id="Q57PT8"/>
<dbReference type="KEGG" id="sec:SCH_1367"/>
<dbReference type="HOGENOM" id="CLU_046206_1_0_6"/>
<dbReference type="Proteomes" id="UP000000538">
    <property type="component" value="Chromosome"/>
</dbReference>
<dbReference type="GO" id="GO:0043531">
    <property type="term" value="F:ADP binding"/>
    <property type="evidence" value="ECO:0007669"/>
    <property type="project" value="UniProtKB-UniRule"/>
</dbReference>
<dbReference type="GO" id="GO:0005524">
    <property type="term" value="F:ATP binding"/>
    <property type="evidence" value="ECO:0007669"/>
    <property type="project" value="InterPro"/>
</dbReference>
<dbReference type="GO" id="GO:0016776">
    <property type="term" value="F:phosphotransferase activity, phosphate group as acceptor"/>
    <property type="evidence" value="ECO:0007669"/>
    <property type="project" value="UniProtKB-UniRule"/>
</dbReference>
<dbReference type="GO" id="GO:0004674">
    <property type="term" value="F:protein serine/threonine kinase activity"/>
    <property type="evidence" value="ECO:0007669"/>
    <property type="project" value="UniProtKB-UniRule"/>
</dbReference>
<dbReference type="HAMAP" id="MF_01062">
    <property type="entry name" value="PSRP"/>
    <property type="match status" value="1"/>
</dbReference>
<dbReference type="InterPro" id="IPR005177">
    <property type="entry name" value="Kinase-pyrophosphorylase"/>
</dbReference>
<dbReference type="InterPro" id="IPR026530">
    <property type="entry name" value="PSRP"/>
</dbReference>
<dbReference type="NCBIfam" id="NF003742">
    <property type="entry name" value="PRK05339.1"/>
    <property type="match status" value="1"/>
</dbReference>
<dbReference type="PANTHER" id="PTHR31756">
    <property type="entry name" value="PYRUVATE, PHOSPHATE DIKINASE REGULATORY PROTEIN 1, CHLOROPLASTIC"/>
    <property type="match status" value="1"/>
</dbReference>
<dbReference type="PANTHER" id="PTHR31756:SF3">
    <property type="entry name" value="PYRUVATE, PHOSPHATE DIKINASE REGULATORY PROTEIN 1, CHLOROPLASTIC"/>
    <property type="match status" value="1"/>
</dbReference>
<dbReference type="Pfam" id="PF03618">
    <property type="entry name" value="Kinase-PPPase"/>
    <property type="match status" value="1"/>
</dbReference>
<name>PSRP_SALCH</name>
<protein>
    <recommendedName>
        <fullName evidence="1">Phosphoenolpyruvate synthase regulatory protein</fullName>
        <shortName evidence="1">PEP synthase regulatory protein</shortName>
        <shortName evidence="1">PSRP</shortName>
        <ecNumber evidence="1">2.7.11.33</ecNumber>
        <ecNumber evidence="1">2.7.4.28</ecNumber>
    </recommendedName>
    <alternativeName>
        <fullName evidence="1">Pyruvate, water dikinase regulatory protein</fullName>
    </alternativeName>
</protein>
<gene>
    <name evidence="1" type="primary">ppsR</name>
    <name type="ordered locus">SCH_1367</name>
</gene>
<reference key="1">
    <citation type="journal article" date="2005" name="Nucleic Acids Res.">
        <title>The genome sequence of Salmonella enterica serovar Choleraesuis, a highly invasive and resistant zoonotic pathogen.</title>
        <authorList>
            <person name="Chiu C.-H."/>
            <person name="Tang P."/>
            <person name="Chu C."/>
            <person name="Hu S."/>
            <person name="Bao Q."/>
            <person name="Yu J."/>
            <person name="Chou Y.-Y."/>
            <person name="Wang H.-S."/>
            <person name="Lee Y.-S."/>
        </authorList>
    </citation>
    <scope>NUCLEOTIDE SEQUENCE [LARGE SCALE GENOMIC DNA]</scope>
    <source>
        <strain>SC-B67</strain>
    </source>
</reference>
<comment type="function">
    <text evidence="1">Bifunctional serine/threonine kinase and phosphorylase involved in the regulation of the phosphoenolpyruvate synthase (PEPS) by catalyzing its phosphorylation/dephosphorylation.</text>
</comment>
<comment type="catalytic activity">
    <reaction evidence="1">
        <text>[pyruvate, water dikinase] + ADP = [pyruvate, water dikinase]-phosphate + AMP + H(+)</text>
        <dbReference type="Rhea" id="RHEA:46020"/>
        <dbReference type="Rhea" id="RHEA-COMP:11425"/>
        <dbReference type="Rhea" id="RHEA-COMP:11426"/>
        <dbReference type="ChEBI" id="CHEBI:15378"/>
        <dbReference type="ChEBI" id="CHEBI:43176"/>
        <dbReference type="ChEBI" id="CHEBI:68546"/>
        <dbReference type="ChEBI" id="CHEBI:456215"/>
        <dbReference type="ChEBI" id="CHEBI:456216"/>
        <dbReference type="EC" id="2.7.11.33"/>
    </reaction>
</comment>
<comment type="catalytic activity">
    <reaction evidence="1">
        <text>[pyruvate, water dikinase]-phosphate + phosphate + H(+) = [pyruvate, water dikinase] + diphosphate</text>
        <dbReference type="Rhea" id="RHEA:48580"/>
        <dbReference type="Rhea" id="RHEA-COMP:11425"/>
        <dbReference type="Rhea" id="RHEA-COMP:11426"/>
        <dbReference type="ChEBI" id="CHEBI:15378"/>
        <dbReference type="ChEBI" id="CHEBI:33019"/>
        <dbReference type="ChEBI" id="CHEBI:43176"/>
        <dbReference type="ChEBI" id="CHEBI:43474"/>
        <dbReference type="ChEBI" id="CHEBI:68546"/>
        <dbReference type="EC" id="2.7.4.28"/>
    </reaction>
</comment>
<comment type="similarity">
    <text evidence="1">Belongs to the pyruvate, phosphate/water dikinase regulatory protein family. PSRP subfamily.</text>
</comment>
<proteinExistence type="inferred from homology"/>
<keyword id="KW-0418">Kinase</keyword>
<keyword id="KW-0547">Nucleotide-binding</keyword>
<keyword id="KW-0723">Serine/threonine-protein kinase</keyword>
<keyword id="KW-0808">Transferase</keyword>
<evidence type="ECO:0000255" key="1">
    <source>
        <dbReference type="HAMAP-Rule" id="MF_01062"/>
    </source>
</evidence>
<sequence>MDNVVDRHVFYISDGTAITAEVLGHAVMSQFPVTISSITLPFVENESRARAVKDQIDAIYQQTGVRPLVFYSIVLPEIRAIILQSEGFCQDIVQALVAPLQQEMKLDPTPIAHRTHGLNPGNLNKYDARIAAIDYTLAHDDGISLRNLDQAQVILLGVSRCGKTPTSLYLAMQFGIRAANYPFIADDMDNLTLPTSLKPLQHKLFGLTIDPERLAAIREERRENSRYASLRQCRMEVAEVEALYRKNQIPCLNSTNYSVEEIATKILDIMGLNRRMY</sequence>
<accession>Q57PT8</accession>
<feature type="chain" id="PRO_0000196705" description="Phosphoenolpyruvate synthase regulatory protein">
    <location>
        <begin position="1"/>
        <end position="277"/>
    </location>
</feature>
<feature type="binding site" evidence="1">
    <location>
        <begin position="157"/>
        <end position="164"/>
    </location>
    <ligand>
        <name>ADP</name>
        <dbReference type="ChEBI" id="CHEBI:456216"/>
    </ligand>
</feature>
<organism>
    <name type="scientific">Salmonella choleraesuis (strain SC-B67)</name>
    <dbReference type="NCBI Taxonomy" id="321314"/>
    <lineage>
        <taxon>Bacteria</taxon>
        <taxon>Pseudomonadati</taxon>
        <taxon>Pseudomonadota</taxon>
        <taxon>Gammaproteobacteria</taxon>
        <taxon>Enterobacterales</taxon>
        <taxon>Enterobacteriaceae</taxon>
        <taxon>Salmonella</taxon>
    </lineage>
</organism>